<dbReference type="EC" id="6.3.2.6" evidence="1"/>
<dbReference type="EMBL" id="CP000730">
    <property type="protein sequence ID" value="ABX29031.1"/>
    <property type="molecule type" value="Genomic_DNA"/>
</dbReference>
<dbReference type="RefSeq" id="WP_000174053.1">
    <property type="nucleotide sequence ID" value="NC_010079.1"/>
</dbReference>
<dbReference type="SMR" id="A8Z1K8"/>
<dbReference type="KEGG" id="sax:USA300HOU_1011"/>
<dbReference type="HOGENOM" id="CLU_061495_2_0_9"/>
<dbReference type="UniPathway" id="UPA00074">
    <property type="reaction ID" value="UER00131"/>
</dbReference>
<dbReference type="GO" id="GO:0005524">
    <property type="term" value="F:ATP binding"/>
    <property type="evidence" value="ECO:0007669"/>
    <property type="project" value="UniProtKB-KW"/>
</dbReference>
<dbReference type="GO" id="GO:0004639">
    <property type="term" value="F:phosphoribosylaminoimidazolesuccinocarboxamide synthase activity"/>
    <property type="evidence" value="ECO:0007669"/>
    <property type="project" value="UniProtKB-UniRule"/>
</dbReference>
<dbReference type="GO" id="GO:0006189">
    <property type="term" value="P:'de novo' IMP biosynthetic process"/>
    <property type="evidence" value="ECO:0007669"/>
    <property type="project" value="UniProtKB-UniRule"/>
</dbReference>
<dbReference type="GO" id="GO:0009236">
    <property type="term" value="P:cobalamin biosynthetic process"/>
    <property type="evidence" value="ECO:0007669"/>
    <property type="project" value="InterPro"/>
</dbReference>
<dbReference type="CDD" id="cd01415">
    <property type="entry name" value="SAICAR_synt_PurC"/>
    <property type="match status" value="1"/>
</dbReference>
<dbReference type="FunFam" id="3.30.200.20:FF:000189">
    <property type="entry name" value="Phosphoribosylaminoimidazole-succinocarboxamide synthase"/>
    <property type="match status" value="1"/>
</dbReference>
<dbReference type="FunFam" id="3.30.470.20:FF:000006">
    <property type="entry name" value="Phosphoribosylaminoimidazole-succinocarboxamide synthase"/>
    <property type="match status" value="1"/>
</dbReference>
<dbReference type="Gene3D" id="3.30.470.20">
    <property type="entry name" value="ATP-grasp fold, B domain"/>
    <property type="match status" value="1"/>
</dbReference>
<dbReference type="Gene3D" id="3.30.200.20">
    <property type="entry name" value="Phosphorylase Kinase, domain 1"/>
    <property type="match status" value="1"/>
</dbReference>
<dbReference type="HAMAP" id="MF_00137">
    <property type="entry name" value="SAICAR_synth"/>
    <property type="match status" value="1"/>
</dbReference>
<dbReference type="InterPro" id="IPR028923">
    <property type="entry name" value="SAICAR_synt/ADE2_N"/>
</dbReference>
<dbReference type="InterPro" id="IPR033934">
    <property type="entry name" value="SAICAR_synt_PurC"/>
</dbReference>
<dbReference type="InterPro" id="IPR001636">
    <property type="entry name" value="SAICAR_synth"/>
</dbReference>
<dbReference type="InterPro" id="IPR050089">
    <property type="entry name" value="SAICAR_synthetase"/>
</dbReference>
<dbReference type="InterPro" id="IPR018236">
    <property type="entry name" value="SAICAR_synthetase_CS"/>
</dbReference>
<dbReference type="NCBIfam" id="TIGR00081">
    <property type="entry name" value="purC"/>
    <property type="match status" value="1"/>
</dbReference>
<dbReference type="PANTHER" id="PTHR43599">
    <property type="entry name" value="MULTIFUNCTIONAL PROTEIN ADE2"/>
    <property type="match status" value="1"/>
</dbReference>
<dbReference type="PANTHER" id="PTHR43599:SF3">
    <property type="entry name" value="SI:DKEY-6E2.2"/>
    <property type="match status" value="1"/>
</dbReference>
<dbReference type="Pfam" id="PF01259">
    <property type="entry name" value="SAICAR_synt"/>
    <property type="match status" value="1"/>
</dbReference>
<dbReference type="SUPFAM" id="SSF56104">
    <property type="entry name" value="SAICAR synthase-like"/>
    <property type="match status" value="1"/>
</dbReference>
<dbReference type="PROSITE" id="PS01057">
    <property type="entry name" value="SAICAR_SYNTHETASE_1"/>
    <property type="match status" value="1"/>
</dbReference>
<dbReference type="PROSITE" id="PS01058">
    <property type="entry name" value="SAICAR_SYNTHETASE_2"/>
    <property type="match status" value="1"/>
</dbReference>
<proteinExistence type="inferred from homology"/>
<gene>
    <name evidence="1" type="primary">purC</name>
    <name type="ordered locus">USA300HOU_1011</name>
</gene>
<reference key="1">
    <citation type="journal article" date="2007" name="BMC Microbiol.">
        <title>Subtle genetic changes enhance virulence of methicillin resistant and sensitive Staphylococcus aureus.</title>
        <authorList>
            <person name="Highlander S.K."/>
            <person name="Hulten K.G."/>
            <person name="Qin X."/>
            <person name="Jiang H."/>
            <person name="Yerrapragada S."/>
            <person name="Mason E.O. Jr."/>
            <person name="Shang Y."/>
            <person name="Williams T.M."/>
            <person name="Fortunov R.M."/>
            <person name="Liu Y."/>
            <person name="Igboeli O."/>
            <person name="Petrosino J."/>
            <person name="Tirumalai M."/>
            <person name="Uzman A."/>
            <person name="Fox G.E."/>
            <person name="Cardenas A.M."/>
            <person name="Muzny D.M."/>
            <person name="Hemphill L."/>
            <person name="Ding Y."/>
            <person name="Dugan S."/>
            <person name="Blyth P.R."/>
            <person name="Buhay C.J."/>
            <person name="Dinh H.H."/>
            <person name="Hawes A.C."/>
            <person name="Holder M."/>
            <person name="Kovar C.L."/>
            <person name="Lee S.L."/>
            <person name="Liu W."/>
            <person name="Nazareth L.V."/>
            <person name="Wang Q."/>
            <person name="Zhou J."/>
            <person name="Kaplan S.L."/>
            <person name="Weinstock G.M."/>
        </authorList>
    </citation>
    <scope>NUCLEOTIDE SEQUENCE [LARGE SCALE GENOMIC DNA]</scope>
    <source>
        <strain>USA300 / TCH1516</strain>
    </source>
</reference>
<comment type="catalytic activity">
    <reaction evidence="1">
        <text>5-amino-1-(5-phospho-D-ribosyl)imidazole-4-carboxylate + L-aspartate + ATP = (2S)-2-[5-amino-1-(5-phospho-beta-D-ribosyl)imidazole-4-carboxamido]succinate + ADP + phosphate + 2 H(+)</text>
        <dbReference type="Rhea" id="RHEA:22628"/>
        <dbReference type="ChEBI" id="CHEBI:15378"/>
        <dbReference type="ChEBI" id="CHEBI:29991"/>
        <dbReference type="ChEBI" id="CHEBI:30616"/>
        <dbReference type="ChEBI" id="CHEBI:43474"/>
        <dbReference type="ChEBI" id="CHEBI:58443"/>
        <dbReference type="ChEBI" id="CHEBI:77657"/>
        <dbReference type="ChEBI" id="CHEBI:456216"/>
        <dbReference type="EC" id="6.3.2.6"/>
    </reaction>
</comment>
<comment type="pathway">
    <text evidence="1">Purine metabolism; IMP biosynthesis via de novo pathway; 5-amino-1-(5-phospho-D-ribosyl)imidazole-4-carboxamide from 5-amino-1-(5-phospho-D-ribosyl)imidazole-4-carboxylate: step 1/2.</text>
</comment>
<comment type="similarity">
    <text evidence="1">Belongs to the SAICAR synthetase family.</text>
</comment>
<organism>
    <name type="scientific">Staphylococcus aureus (strain USA300 / TCH1516)</name>
    <dbReference type="NCBI Taxonomy" id="451516"/>
    <lineage>
        <taxon>Bacteria</taxon>
        <taxon>Bacillati</taxon>
        <taxon>Bacillota</taxon>
        <taxon>Bacilli</taxon>
        <taxon>Bacillales</taxon>
        <taxon>Staphylococcaceae</taxon>
        <taxon>Staphylococcus</taxon>
    </lineage>
</organism>
<name>PUR7_STAAT</name>
<feature type="chain" id="PRO_1000076470" description="Phosphoribosylaminoimidazole-succinocarboxamide synthase">
    <location>
        <begin position="1"/>
        <end position="234"/>
    </location>
</feature>
<protein>
    <recommendedName>
        <fullName evidence="1">Phosphoribosylaminoimidazole-succinocarboxamide synthase</fullName>
        <ecNumber evidence="1">6.3.2.6</ecNumber>
    </recommendedName>
    <alternativeName>
        <fullName evidence="1">SAICAR synthetase</fullName>
    </alternativeName>
</protein>
<sequence length="234" mass="26693">MTLLYEGKAKRIFSTNQENELRVEYKDEVTAGNGAKKDTMAGKGRLNNQITSIIFKYLQENGIESHFIKQLSETEQLVKPVKIIPLEVVVRNIASGSITKRLGFENGEVFREPLVEFFYKNDALNDPLITDDHVKLLNIASDEDIEILKSKALKINNVLKQLMDAMNLKLVDFKIEFGKTETGQILLADEISPDTCRIWDKATNANFDKDVYRNNTGSLIETYQIFLNKLEDLK</sequence>
<keyword id="KW-0067">ATP-binding</keyword>
<keyword id="KW-0436">Ligase</keyword>
<keyword id="KW-0547">Nucleotide-binding</keyword>
<keyword id="KW-0658">Purine biosynthesis</keyword>
<accession>A8Z1K8</accession>
<evidence type="ECO:0000255" key="1">
    <source>
        <dbReference type="HAMAP-Rule" id="MF_00137"/>
    </source>
</evidence>